<protein>
    <recommendedName>
        <fullName evidence="1">3-dehydroquinate synthase</fullName>
        <shortName evidence="1">DHQS</shortName>
        <ecNumber evidence="1">4.2.3.4</ecNumber>
    </recommendedName>
</protein>
<reference key="1">
    <citation type="journal article" date="2004" name="Nucleic Acids Res.">
        <title>Unique features revealed by the genome sequence of Acinetobacter sp. ADP1, a versatile and naturally transformation competent bacterium.</title>
        <authorList>
            <person name="Barbe V."/>
            <person name="Vallenet D."/>
            <person name="Fonknechten N."/>
            <person name="Kreimeyer A."/>
            <person name="Oztas S."/>
            <person name="Labarre L."/>
            <person name="Cruveiller S."/>
            <person name="Robert C."/>
            <person name="Duprat S."/>
            <person name="Wincker P."/>
            <person name="Ornston L.N."/>
            <person name="Weissenbach J."/>
            <person name="Marliere P."/>
            <person name="Cohen G.N."/>
            <person name="Medigue C."/>
        </authorList>
    </citation>
    <scope>NUCLEOTIDE SEQUENCE [LARGE SCALE GENOMIC DNA]</scope>
    <source>
        <strain>ATCC 33305 / BD413 / ADP1</strain>
    </source>
</reference>
<dbReference type="EC" id="4.2.3.4" evidence="1"/>
<dbReference type="EMBL" id="CR543861">
    <property type="protein sequence ID" value="CAG70020.1"/>
    <property type="molecule type" value="Genomic_DNA"/>
</dbReference>
<dbReference type="RefSeq" id="WP_004923735.1">
    <property type="nucleotide sequence ID" value="NC_005966.1"/>
</dbReference>
<dbReference type="SMR" id="Q6F7E5"/>
<dbReference type="STRING" id="202950.GCA_001485005_02192"/>
<dbReference type="GeneID" id="45235548"/>
<dbReference type="KEGG" id="aci:ACIAD3353"/>
<dbReference type="eggNOG" id="COG0337">
    <property type="taxonomic scope" value="Bacteria"/>
</dbReference>
<dbReference type="HOGENOM" id="CLU_001201_0_2_6"/>
<dbReference type="OrthoDB" id="9806583at2"/>
<dbReference type="BioCyc" id="ASP62977:ACIAD_RS15165-MONOMER"/>
<dbReference type="UniPathway" id="UPA00053">
    <property type="reaction ID" value="UER00085"/>
</dbReference>
<dbReference type="Proteomes" id="UP000000430">
    <property type="component" value="Chromosome"/>
</dbReference>
<dbReference type="GO" id="GO:0005737">
    <property type="term" value="C:cytoplasm"/>
    <property type="evidence" value="ECO:0007669"/>
    <property type="project" value="UniProtKB-SubCell"/>
</dbReference>
<dbReference type="GO" id="GO:0003856">
    <property type="term" value="F:3-dehydroquinate synthase activity"/>
    <property type="evidence" value="ECO:0007669"/>
    <property type="project" value="UniProtKB-UniRule"/>
</dbReference>
<dbReference type="GO" id="GO:0046872">
    <property type="term" value="F:metal ion binding"/>
    <property type="evidence" value="ECO:0007669"/>
    <property type="project" value="UniProtKB-KW"/>
</dbReference>
<dbReference type="GO" id="GO:0000166">
    <property type="term" value="F:nucleotide binding"/>
    <property type="evidence" value="ECO:0007669"/>
    <property type="project" value="UniProtKB-KW"/>
</dbReference>
<dbReference type="GO" id="GO:0008652">
    <property type="term" value="P:amino acid biosynthetic process"/>
    <property type="evidence" value="ECO:0007669"/>
    <property type="project" value="UniProtKB-KW"/>
</dbReference>
<dbReference type="GO" id="GO:0009073">
    <property type="term" value="P:aromatic amino acid family biosynthetic process"/>
    <property type="evidence" value="ECO:0007669"/>
    <property type="project" value="UniProtKB-KW"/>
</dbReference>
<dbReference type="GO" id="GO:0009423">
    <property type="term" value="P:chorismate biosynthetic process"/>
    <property type="evidence" value="ECO:0007669"/>
    <property type="project" value="UniProtKB-UniRule"/>
</dbReference>
<dbReference type="CDD" id="cd08195">
    <property type="entry name" value="DHQS"/>
    <property type="match status" value="1"/>
</dbReference>
<dbReference type="FunFam" id="1.20.1090.10:FF:000002">
    <property type="entry name" value="3-dehydroquinate synthase"/>
    <property type="match status" value="1"/>
</dbReference>
<dbReference type="FunFam" id="3.40.50.1970:FF:000001">
    <property type="entry name" value="3-dehydroquinate synthase"/>
    <property type="match status" value="1"/>
</dbReference>
<dbReference type="Gene3D" id="3.40.50.1970">
    <property type="match status" value="1"/>
</dbReference>
<dbReference type="Gene3D" id="1.20.1090.10">
    <property type="entry name" value="Dehydroquinate synthase-like - alpha domain"/>
    <property type="match status" value="1"/>
</dbReference>
<dbReference type="HAMAP" id="MF_00110">
    <property type="entry name" value="DHQ_synthase"/>
    <property type="match status" value="1"/>
</dbReference>
<dbReference type="InterPro" id="IPR050071">
    <property type="entry name" value="Dehydroquinate_synthase"/>
</dbReference>
<dbReference type="InterPro" id="IPR016037">
    <property type="entry name" value="DHQ_synth_AroB"/>
</dbReference>
<dbReference type="InterPro" id="IPR030963">
    <property type="entry name" value="DHQ_synth_fam"/>
</dbReference>
<dbReference type="InterPro" id="IPR030960">
    <property type="entry name" value="DHQS/DOIS_N"/>
</dbReference>
<dbReference type="InterPro" id="IPR056179">
    <property type="entry name" value="DHQS_C"/>
</dbReference>
<dbReference type="NCBIfam" id="TIGR01357">
    <property type="entry name" value="aroB"/>
    <property type="match status" value="1"/>
</dbReference>
<dbReference type="PANTHER" id="PTHR43622">
    <property type="entry name" value="3-DEHYDROQUINATE SYNTHASE"/>
    <property type="match status" value="1"/>
</dbReference>
<dbReference type="PANTHER" id="PTHR43622:SF7">
    <property type="entry name" value="3-DEHYDROQUINATE SYNTHASE, CHLOROPLASTIC"/>
    <property type="match status" value="1"/>
</dbReference>
<dbReference type="Pfam" id="PF01761">
    <property type="entry name" value="DHQ_synthase"/>
    <property type="match status" value="1"/>
</dbReference>
<dbReference type="Pfam" id="PF24621">
    <property type="entry name" value="DHQS_C"/>
    <property type="match status" value="1"/>
</dbReference>
<dbReference type="PIRSF" id="PIRSF001455">
    <property type="entry name" value="DHQ_synth"/>
    <property type="match status" value="1"/>
</dbReference>
<dbReference type="SUPFAM" id="SSF56796">
    <property type="entry name" value="Dehydroquinate synthase-like"/>
    <property type="match status" value="1"/>
</dbReference>
<keyword id="KW-0028">Amino-acid biosynthesis</keyword>
<keyword id="KW-0057">Aromatic amino acid biosynthesis</keyword>
<keyword id="KW-0170">Cobalt</keyword>
<keyword id="KW-0963">Cytoplasm</keyword>
<keyword id="KW-0456">Lyase</keyword>
<keyword id="KW-0479">Metal-binding</keyword>
<keyword id="KW-0520">NAD</keyword>
<keyword id="KW-0547">Nucleotide-binding</keyword>
<keyword id="KW-0862">Zinc</keyword>
<accession>Q6F7E5</accession>
<feature type="chain" id="PRO_0000231060" description="3-dehydroquinate synthase">
    <location>
        <begin position="1"/>
        <end position="362"/>
    </location>
</feature>
<feature type="binding site" evidence="1">
    <location>
        <begin position="70"/>
        <end position="75"/>
    </location>
    <ligand>
        <name>NAD(+)</name>
        <dbReference type="ChEBI" id="CHEBI:57540"/>
    </ligand>
</feature>
<feature type="binding site" evidence="1">
    <location>
        <begin position="104"/>
        <end position="108"/>
    </location>
    <ligand>
        <name>NAD(+)</name>
        <dbReference type="ChEBI" id="CHEBI:57540"/>
    </ligand>
</feature>
<feature type="binding site" evidence="1">
    <location>
        <begin position="128"/>
        <end position="129"/>
    </location>
    <ligand>
        <name>NAD(+)</name>
        <dbReference type="ChEBI" id="CHEBI:57540"/>
    </ligand>
</feature>
<feature type="binding site" evidence="1">
    <location>
        <position position="141"/>
    </location>
    <ligand>
        <name>NAD(+)</name>
        <dbReference type="ChEBI" id="CHEBI:57540"/>
    </ligand>
</feature>
<feature type="binding site" evidence="1">
    <location>
        <position position="150"/>
    </location>
    <ligand>
        <name>NAD(+)</name>
        <dbReference type="ChEBI" id="CHEBI:57540"/>
    </ligand>
</feature>
<feature type="binding site" evidence="1">
    <location>
        <position position="183"/>
    </location>
    <ligand>
        <name>Zn(2+)</name>
        <dbReference type="ChEBI" id="CHEBI:29105"/>
    </ligand>
</feature>
<feature type="binding site" evidence="1">
    <location>
        <position position="246"/>
    </location>
    <ligand>
        <name>Zn(2+)</name>
        <dbReference type="ChEBI" id="CHEBI:29105"/>
    </ligand>
</feature>
<feature type="binding site" evidence="1">
    <location>
        <position position="263"/>
    </location>
    <ligand>
        <name>Zn(2+)</name>
        <dbReference type="ChEBI" id="CHEBI:29105"/>
    </ligand>
</feature>
<evidence type="ECO:0000255" key="1">
    <source>
        <dbReference type="HAMAP-Rule" id="MF_00110"/>
    </source>
</evidence>
<proteinExistence type="inferred from homology"/>
<name>AROB_ACIAD</name>
<sequence length="362" mass="39743">MQTLHVELGDRRYPIFIGSQLNPQNLLAPYIKGRQVMIVTNTTLEQLYLQHYQDALHALDKQVAVCVLPDGEKYKNIEHLNLIFDALLKAGFNRDCTVLALGGGVIGDMAGFAAASFQRGVYFVQIPTTLLSQVDSSVGGKTGINHPLGKNMIGAFKQPEVVMADMSQLKTLPPRELSAGLAEVIKYALLGDIEFLGWLETHMDGLIAGDETLLAEAVYRSCAHKARIVANDEKEQGERALLNLGHTFGHAIESYLGYGEWLHGEAVATGMVMAADLSHRLGWISSGDLERTKKIIQRANLPISCPPIPLDEFLSYMSHDKKVLNGQLRLVLLQQLGQAIITKTFDVEMMKAAILANQASHT</sequence>
<gene>
    <name evidence="1" type="primary">aroB</name>
    <name type="ordered locus">ACIAD3353</name>
</gene>
<organism>
    <name type="scientific">Acinetobacter baylyi (strain ATCC 33305 / BD413 / ADP1)</name>
    <dbReference type="NCBI Taxonomy" id="62977"/>
    <lineage>
        <taxon>Bacteria</taxon>
        <taxon>Pseudomonadati</taxon>
        <taxon>Pseudomonadota</taxon>
        <taxon>Gammaproteobacteria</taxon>
        <taxon>Moraxellales</taxon>
        <taxon>Moraxellaceae</taxon>
        <taxon>Acinetobacter</taxon>
    </lineage>
</organism>
<comment type="function">
    <text evidence="1">Catalyzes the conversion of 3-deoxy-D-arabino-heptulosonate 7-phosphate (DAHP) to dehydroquinate (DHQ).</text>
</comment>
<comment type="catalytic activity">
    <reaction evidence="1">
        <text>7-phospho-2-dehydro-3-deoxy-D-arabino-heptonate = 3-dehydroquinate + phosphate</text>
        <dbReference type="Rhea" id="RHEA:21968"/>
        <dbReference type="ChEBI" id="CHEBI:32364"/>
        <dbReference type="ChEBI" id="CHEBI:43474"/>
        <dbReference type="ChEBI" id="CHEBI:58394"/>
        <dbReference type="EC" id="4.2.3.4"/>
    </reaction>
</comment>
<comment type="cofactor">
    <cofactor evidence="1">
        <name>Co(2+)</name>
        <dbReference type="ChEBI" id="CHEBI:48828"/>
    </cofactor>
    <cofactor evidence="1">
        <name>Zn(2+)</name>
        <dbReference type="ChEBI" id="CHEBI:29105"/>
    </cofactor>
    <text evidence="1">Binds 1 divalent metal cation per subunit. Can use either Co(2+) or Zn(2+).</text>
</comment>
<comment type="cofactor">
    <cofactor evidence="1">
        <name>NAD(+)</name>
        <dbReference type="ChEBI" id="CHEBI:57540"/>
    </cofactor>
</comment>
<comment type="pathway">
    <text evidence="1">Metabolic intermediate biosynthesis; chorismate biosynthesis; chorismate from D-erythrose 4-phosphate and phosphoenolpyruvate: step 2/7.</text>
</comment>
<comment type="subcellular location">
    <subcellularLocation>
        <location evidence="1">Cytoplasm</location>
    </subcellularLocation>
</comment>
<comment type="similarity">
    <text evidence="1">Belongs to the sugar phosphate cyclases superfamily. Dehydroquinate synthase family.</text>
</comment>